<keyword id="KW-0963">Cytoplasm</keyword>
<keyword id="KW-0378">Hydrolase</keyword>
<keyword id="KW-0694">RNA-binding</keyword>
<keyword id="KW-0820">tRNA-binding</keyword>
<evidence type="ECO:0000255" key="1">
    <source>
        <dbReference type="HAMAP-Rule" id="MF_00083"/>
    </source>
</evidence>
<name>PTH_BIFLD</name>
<protein>
    <recommendedName>
        <fullName evidence="1">Peptidyl-tRNA hydrolase</fullName>
        <shortName evidence="1">Pth</shortName>
        <ecNumber evidence="1">3.1.1.29</ecNumber>
    </recommendedName>
</protein>
<accession>B3DSV5</accession>
<reference key="1">
    <citation type="journal article" date="2008" name="BMC Genomics">
        <title>Comparative genomic analysis of the gut bacterium Bifidobacterium longum reveals loci susceptible to deletion during pure culture growth.</title>
        <authorList>
            <person name="Lee J.H."/>
            <person name="Karamychev V.N."/>
            <person name="Kozyavkin S.A."/>
            <person name="Mills D."/>
            <person name="Pavlov A.R."/>
            <person name="Pavlova N.V."/>
            <person name="Polouchine N.N."/>
            <person name="Richardson P.M."/>
            <person name="Shakhova V.V."/>
            <person name="Slesarev A.I."/>
            <person name="Weimer B."/>
            <person name="O'Sullivan D.J."/>
        </authorList>
    </citation>
    <scope>NUCLEOTIDE SEQUENCE [LARGE SCALE GENOMIC DNA]</scope>
    <source>
        <strain>DJO10A</strain>
    </source>
</reference>
<feature type="chain" id="PRO_1000092910" description="Peptidyl-tRNA hydrolase">
    <location>
        <begin position="1"/>
        <end position="199"/>
    </location>
</feature>
<feature type="active site" description="Proton acceptor" evidence="1">
    <location>
        <position position="23"/>
    </location>
</feature>
<feature type="binding site" evidence="1">
    <location>
        <position position="18"/>
    </location>
    <ligand>
        <name>tRNA</name>
        <dbReference type="ChEBI" id="CHEBI:17843"/>
    </ligand>
</feature>
<feature type="binding site" evidence="1">
    <location>
        <position position="72"/>
    </location>
    <ligand>
        <name>tRNA</name>
        <dbReference type="ChEBI" id="CHEBI:17843"/>
    </ligand>
</feature>
<feature type="binding site" evidence="1">
    <location>
        <position position="74"/>
    </location>
    <ligand>
        <name>tRNA</name>
        <dbReference type="ChEBI" id="CHEBI:17843"/>
    </ligand>
</feature>
<feature type="binding site" evidence="1">
    <location>
        <position position="120"/>
    </location>
    <ligand>
        <name>tRNA</name>
        <dbReference type="ChEBI" id="CHEBI:17843"/>
    </ligand>
</feature>
<feature type="site" description="Discriminates between blocked and unblocked aminoacyl-tRNA" evidence="1">
    <location>
        <position position="13"/>
    </location>
</feature>
<feature type="site" description="Stabilizes the basic form of H active site to accept a proton" evidence="1">
    <location>
        <position position="99"/>
    </location>
</feature>
<gene>
    <name evidence="1" type="primary">pth</name>
    <name type="ordered locus">BLD_0778</name>
</gene>
<dbReference type="EC" id="3.1.1.29" evidence="1"/>
<dbReference type="EMBL" id="CP000605">
    <property type="protein sequence ID" value="ACD98224.1"/>
    <property type="molecule type" value="Genomic_DNA"/>
</dbReference>
<dbReference type="RefSeq" id="WP_007053586.1">
    <property type="nucleotide sequence ID" value="NZ_AABM02000002.1"/>
</dbReference>
<dbReference type="SMR" id="B3DSV5"/>
<dbReference type="KEGG" id="blj:BLD_0778"/>
<dbReference type="HOGENOM" id="CLU_062456_3_1_11"/>
<dbReference type="Proteomes" id="UP000002419">
    <property type="component" value="Chromosome"/>
</dbReference>
<dbReference type="GO" id="GO:0005737">
    <property type="term" value="C:cytoplasm"/>
    <property type="evidence" value="ECO:0007669"/>
    <property type="project" value="UniProtKB-SubCell"/>
</dbReference>
<dbReference type="GO" id="GO:0004045">
    <property type="term" value="F:peptidyl-tRNA hydrolase activity"/>
    <property type="evidence" value="ECO:0007669"/>
    <property type="project" value="UniProtKB-UniRule"/>
</dbReference>
<dbReference type="GO" id="GO:0000049">
    <property type="term" value="F:tRNA binding"/>
    <property type="evidence" value="ECO:0007669"/>
    <property type="project" value="UniProtKB-UniRule"/>
</dbReference>
<dbReference type="GO" id="GO:0006515">
    <property type="term" value="P:protein quality control for misfolded or incompletely synthesized proteins"/>
    <property type="evidence" value="ECO:0007669"/>
    <property type="project" value="UniProtKB-UniRule"/>
</dbReference>
<dbReference type="GO" id="GO:0072344">
    <property type="term" value="P:rescue of stalled ribosome"/>
    <property type="evidence" value="ECO:0007669"/>
    <property type="project" value="UniProtKB-UniRule"/>
</dbReference>
<dbReference type="CDD" id="cd00462">
    <property type="entry name" value="PTH"/>
    <property type="match status" value="1"/>
</dbReference>
<dbReference type="FunFam" id="3.40.50.1470:FF:000001">
    <property type="entry name" value="Peptidyl-tRNA hydrolase"/>
    <property type="match status" value="1"/>
</dbReference>
<dbReference type="Gene3D" id="3.40.50.1470">
    <property type="entry name" value="Peptidyl-tRNA hydrolase"/>
    <property type="match status" value="1"/>
</dbReference>
<dbReference type="HAMAP" id="MF_00083">
    <property type="entry name" value="Pept_tRNA_hydro_bact"/>
    <property type="match status" value="1"/>
</dbReference>
<dbReference type="InterPro" id="IPR001328">
    <property type="entry name" value="Pept_tRNA_hydro"/>
</dbReference>
<dbReference type="InterPro" id="IPR018171">
    <property type="entry name" value="Pept_tRNA_hydro_CS"/>
</dbReference>
<dbReference type="InterPro" id="IPR036416">
    <property type="entry name" value="Pept_tRNA_hydro_sf"/>
</dbReference>
<dbReference type="NCBIfam" id="TIGR00447">
    <property type="entry name" value="pth"/>
    <property type="match status" value="1"/>
</dbReference>
<dbReference type="PANTHER" id="PTHR17224">
    <property type="entry name" value="PEPTIDYL-TRNA HYDROLASE"/>
    <property type="match status" value="1"/>
</dbReference>
<dbReference type="PANTHER" id="PTHR17224:SF1">
    <property type="entry name" value="PEPTIDYL-TRNA HYDROLASE"/>
    <property type="match status" value="1"/>
</dbReference>
<dbReference type="Pfam" id="PF01195">
    <property type="entry name" value="Pept_tRNA_hydro"/>
    <property type="match status" value="1"/>
</dbReference>
<dbReference type="SUPFAM" id="SSF53178">
    <property type="entry name" value="Peptidyl-tRNA hydrolase-like"/>
    <property type="match status" value="1"/>
</dbReference>
<dbReference type="PROSITE" id="PS01195">
    <property type="entry name" value="PEPT_TRNA_HYDROL_1"/>
    <property type="match status" value="1"/>
</dbReference>
<dbReference type="PROSITE" id="PS01196">
    <property type="entry name" value="PEPT_TRNA_HYDROL_2"/>
    <property type="match status" value="1"/>
</dbReference>
<comment type="function">
    <text evidence="1">Hydrolyzes ribosome-free peptidyl-tRNAs (with 1 or more amino acids incorporated), which drop off the ribosome during protein synthesis, or as a result of ribosome stalling.</text>
</comment>
<comment type="function">
    <text evidence="1">Catalyzes the release of premature peptidyl moieties from peptidyl-tRNA molecules trapped in stalled 50S ribosomal subunits, and thus maintains levels of free tRNAs and 50S ribosomes.</text>
</comment>
<comment type="catalytic activity">
    <reaction evidence="1">
        <text>an N-acyl-L-alpha-aminoacyl-tRNA + H2O = an N-acyl-L-amino acid + a tRNA + H(+)</text>
        <dbReference type="Rhea" id="RHEA:54448"/>
        <dbReference type="Rhea" id="RHEA-COMP:10123"/>
        <dbReference type="Rhea" id="RHEA-COMP:13883"/>
        <dbReference type="ChEBI" id="CHEBI:15377"/>
        <dbReference type="ChEBI" id="CHEBI:15378"/>
        <dbReference type="ChEBI" id="CHEBI:59874"/>
        <dbReference type="ChEBI" id="CHEBI:78442"/>
        <dbReference type="ChEBI" id="CHEBI:138191"/>
        <dbReference type="EC" id="3.1.1.29"/>
    </reaction>
</comment>
<comment type="subunit">
    <text evidence="1">Monomer.</text>
</comment>
<comment type="subcellular location">
    <subcellularLocation>
        <location evidence="1">Cytoplasm</location>
    </subcellularLocation>
</comment>
<comment type="similarity">
    <text evidence="1">Belongs to the PTH family.</text>
</comment>
<proteinExistence type="inferred from homology"/>
<organism>
    <name type="scientific">Bifidobacterium longum (strain DJO10A)</name>
    <dbReference type="NCBI Taxonomy" id="205913"/>
    <lineage>
        <taxon>Bacteria</taxon>
        <taxon>Bacillati</taxon>
        <taxon>Actinomycetota</taxon>
        <taxon>Actinomycetes</taxon>
        <taxon>Bifidobacteriales</taxon>
        <taxon>Bifidobacteriaceae</taxon>
        <taxon>Bifidobacterium</taxon>
    </lineage>
</organism>
<sequence length="199" mass="21752">MASDFWLIAGLGNPGKKYEDTRHNMGFMTADVLAERWTVNFADHKGLAMLGKSVMNLDGRTVKFFLAKPLTYMNDSGNAVASISAYYQIEPDHIVVIHDDMDLEFGRIKVKAGGSAGGHNGIKSIDRSLGTPKYARVRMGVGHSKRGANAHDNTVNWVLGGFGPDQRKQLPEFLADGADAAEDIIFHGLAKTQEKFNGR</sequence>